<accession>P86567</accession>
<feature type="peptide" id="PRO_0000395636" description="Tachykinin-related peptide 5" evidence="1">
    <location>
        <begin position="1"/>
        <end position="10"/>
    </location>
</feature>
<feature type="modified residue" description="Arginine amide" evidence="1">
    <location>
        <position position="10"/>
    </location>
</feature>
<proteinExistence type="evidence at protein level"/>
<keyword id="KW-0027">Amidation</keyword>
<keyword id="KW-0903">Direct protein sequencing</keyword>
<keyword id="KW-0527">Neuropeptide</keyword>
<keyword id="KW-0964">Secreted</keyword>
<evidence type="ECO:0000269" key="1">
    <source>
    </source>
</evidence>
<evidence type="ECO:0000303" key="2">
    <source>
    </source>
</evidence>
<evidence type="ECO:0000305" key="3"/>
<organism>
    <name type="scientific">Banasa dimiata</name>
    <name type="common">Banasa stink bug</name>
    <name type="synonym">Pentatoma dimiata</name>
    <dbReference type="NCBI Taxonomy" id="756487"/>
    <lineage>
        <taxon>Eukaryota</taxon>
        <taxon>Metazoa</taxon>
        <taxon>Ecdysozoa</taxon>
        <taxon>Arthropoda</taxon>
        <taxon>Hexapoda</taxon>
        <taxon>Insecta</taxon>
        <taxon>Pterygota</taxon>
        <taxon>Neoptera</taxon>
        <taxon>Paraneoptera</taxon>
        <taxon>Hemiptera</taxon>
        <taxon>Heteroptera</taxon>
        <taxon>Panheteroptera</taxon>
        <taxon>Pentatomomorpha</taxon>
        <taxon>Pentatomoidea</taxon>
        <taxon>Pentatomidae</taxon>
        <taxon>Pentatominae</taxon>
        <taxon>Banasa</taxon>
    </lineage>
</organism>
<name>TRP5_BANDI</name>
<dbReference type="GO" id="GO:0005576">
    <property type="term" value="C:extracellular region"/>
    <property type="evidence" value="ECO:0007005"/>
    <property type="project" value="UniProtKB"/>
</dbReference>
<dbReference type="GO" id="GO:0007218">
    <property type="term" value="P:neuropeptide signaling pathway"/>
    <property type="evidence" value="ECO:0007669"/>
    <property type="project" value="UniProtKB-KW"/>
</dbReference>
<sequence>APLMGFQGVR</sequence>
<comment type="subcellular location">
    <subcellularLocation>
        <location evidence="1 3">Secreted</location>
    </subcellularLocation>
</comment>
<comment type="tissue specificity">
    <text evidence="1">Expressed in the antennal lobe (at protein level).</text>
</comment>
<protein>
    <recommendedName>
        <fullName evidence="2">Tachykinin-related peptide 5</fullName>
        <shortName evidence="2">TKRP-5</shortName>
    </recommendedName>
</protein>
<reference evidence="3" key="1">
    <citation type="journal article" date="2009" name="Peptides">
        <title>Neuropeptides in Heteroptera: identification of allatotropin-related peptide and tachykinin-related peptides using MALDI-TOF mass spectrometry.</title>
        <authorList>
            <person name="Neupert S."/>
            <person name="Russell W.K."/>
            <person name="Russell D.H."/>
            <person name="Lopez J.D. Jr."/>
            <person name="Predel R."/>
            <person name="Nachman R.J."/>
        </authorList>
    </citation>
    <scope>PROTEIN SEQUENCE</scope>
    <scope>SUBCELLULAR LOCATION</scope>
    <scope>TISSUE SPECIFICITY</scope>
    <scope>AMIDATION AT ARG-10</scope>
    <source>
        <tissue evidence="1">Antennal lobe</tissue>
    </source>
</reference>